<proteinExistence type="evidence at protein level"/>
<keyword id="KW-0064">Aspartyl protease</keyword>
<keyword id="KW-1015">Disulfide bond</keyword>
<keyword id="KW-0325">Glycoprotein</keyword>
<keyword id="KW-0378">Hydrolase</keyword>
<keyword id="KW-0458">Lysosome</keyword>
<keyword id="KW-0645">Protease</keyword>
<keyword id="KW-1185">Reference proteome</keyword>
<keyword id="KW-0964">Secreted</keyword>
<keyword id="KW-0732">Signal</keyword>
<keyword id="KW-0865">Zymogen</keyword>
<protein>
    <recommendedName>
        <fullName>Cathepsin D</fullName>
        <ecNumber>3.4.23.5</ecNumber>
    </recommendedName>
</protein>
<evidence type="ECO:0000250" key="1"/>
<evidence type="ECO:0000250" key="2">
    <source>
        <dbReference type="UniProtKB" id="P07339"/>
    </source>
</evidence>
<evidence type="ECO:0000255" key="3"/>
<evidence type="ECO:0000255" key="4">
    <source>
        <dbReference type="PROSITE-ProRule" id="PRU01103"/>
    </source>
</evidence>
<evidence type="ECO:0000255" key="5">
    <source>
        <dbReference type="PROSITE-ProRule" id="PRU10094"/>
    </source>
</evidence>
<evidence type="ECO:0000269" key="6">
    <source>
    </source>
</evidence>
<evidence type="ECO:0000269" key="7">
    <source>
    </source>
</evidence>
<evidence type="ECO:0000305" key="8"/>
<dbReference type="EC" id="3.4.23.5"/>
<dbReference type="EMBL" id="X53337">
    <property type="protein sequence ID" value="CAA37423.1"/>
    <property type="molecule type" value="mRNA"/>
</dbReference>
<dbReference type="EMBL" id="X52886">
    <property type="protein sequence ID" value="CAA37067.1"/>
    <property type="molecule type" value="mRNA"/>
</dbReference>
<dbReference type="EMBL" id="X68378">
    <property type="protein sequence ID" value="CAA48453.1"/>
    <property type="molecule type" value="Genomic_DNA"/>
</dbReference>
<dbReference type="EMBL" id="X68379">
    <property type="protein sequence ID" value="CAA48453.1"/>
    <property type="status" value="JOINED"/>
    <property type="molecule type" value="Genomic_DNA"/>
</dbReference>
<dbReference type="EMBL" id="X68380">
    <property type="protein sequence ID" value="CAA48453.1"/>
    <property type="status" value="JOINED"/>
    <property type="molecule type" value="Genomic_DNA"/>
</dbReference>
<dbReference type="EMBL" id="X68381">
    <property type="protein sequence ID" value="CAA48453.1"/>
    <property type="status" value="JOINED"/>
    <property type="molecule type" value="Genomic_DNA"/>
</dbReference>
<dbReference type="EMBL" id="X68382">
    <property type="protein sequence ID" value="CAA48453.1"/>
    <property type="status" value="JOINED"/>
    <property type="molecule type" value="Genomic_DNA"/>
</dbReference>
<dbReference type="EMBL" id="X68383">
    <property type="protein sequence ID" value="CAA48453.1"/>
    <property type="status" value="JOINED"/>
    <property type="molecule type" value="Genomic_DNA"/>
</dbReference>
<dbReference type="EMBL" id="BC054758">
    <property type="protein sequence ID" value="AAH54758.1"/>
    <property type="molecule type" value="mRNA"/>
</dbReference>
<dbReference type="EMBL" id="BC057931">
    <property type="protein sequence ID" value="AAH57931.1"/>
    <property type="molecule type" value="mRNA"/>
</dbReference>
<dbReference type="CCDS" id="CCDS22029.1"/>
<dbReference type="PIR" id="I48278">
    <property type="entry name" value="KHMSD"/>
</dbReference>
<dbReference type="RefSeq" id="NP_034113.1">
    <property type="nucleotide sequence ID" value="NM_009983.3"/>
</dbReference>
<dbReference type="SMR" id="P18242"/>
<dbReference type="BioGRID" id="198970">
    <property type="interactions" value="10"/>
</dbReference>
<dbReference type="FunCoup" id="P18242">
    <property type="interactions" value="1484"/>
</dbReference>
<dbReference type="IntAct" id="P18242">
    <property type="interactions" value="11"/>
</dbReference>
<dbReference type="MINT" id="P18242"/>
<dbReference type="STRING" id="10090.ENSMUSP00000121203"/>
<dbReference type="MEROPS" id="A01.009"/>
<dbReference type="GlyConnect" id="2190">
    <property type="glycosylation" value="10 N-Linked glycans (2 sites)"/>
</dbReference>
<dbReference type="GlyCosmos" id="P18242">
    <property type="glycosylation" value="2 sites, 10 glycans"/>
</dbReference>
<dbReference type="GlyGen" id="P18242">
    <property type="glycosylation" value="4 sites, 11 N-linked glycans (2 sites), 1 O-linked glycan (2 sites)"/>
</dbReference>
<dbReference type="iPTMnet" id="P18242"/>
<dbReference type="PhosphoSitePlus" id="P18242"/>
<dbReference type="SwissPalm" id="P18242"/>
<dbReference type="CPTAC" id="non-CPTAC-3403"/>
<dbReference type="CPTAC" id="non-CPTAC-3695"/>
<dbReference type="jPOST" id="P18242"/>
<dbReference type="PaxDb" id="10090-ENSMUSP00000121203"/>
<dbReference type="PeptideAtlas" id="P18242"/>
<dbReference type="ProteomicsDB" id="265551"/>
<dbReference type="Pumba" id="P18242"/>
<dbReference type="DNASU" id="13033"/>
<dbReference type="Ensembl" id="ENSMUST00000151120.9">
    <property type="protein sequence ID" value="ENSMUSP00000121203.2"/>
    <property type="gene ID" value="ENSMUSG00000007891.17"/>
</dbReference>
<dbReference type="GeneID" id="13033"/>
<dbReference type="KEGG" id="mmu:13033"/>
<dbReference type="UCSC" id="uc009kmv.1">
    <property type="organism name" value="mouse"/>
</dbReference>
<dbReference type="AGR" id="MGI:88562"/>
<dbReference type="CTD" id="1509"/>
<dbReference type="MGI" id="MGI:88562">
    <property type="gene designation" value="Ctsd"/>
</dbReference>
<dbReference type="VEuPathDB" id="HostDB:ENSMUSG00000007891"/>
<dbReference type="eggNOG" id="KOG1339">
    <property type="taxonomic scope" value="Eukaryota"/>
</dbReference>
<dbReference type="GeneTree" id="ENSGT00940000155733"/>
<dbReference type="HOGENOM" id="CLU_013253_3_1_1"/>
<dbReference type="InParanoid" id="P18242"/>
<dbReference type="OMA" id="KYDHDAS"/>
<dbReference type="OrthoDB" id="771136at2759"/>
<dbReference type="PhylomeDB" id="P18242"/>
<dbReference type="TreeFam" id="TF314990"/>
<dbReference type="BRENDA" id="3.4.23.5">
    <property type="organism ID" value="3474"/>
</dbReference>
<dbReference type="Reactome" id="R-MMU-1442490">
    <property type="pathway name" value="Collagen degradation"/>
</dbReference>
<dbReference type="Reactome" id="R-MMU-2022377">
    <property type="pathway name" value="Metabolism of Angiotensinogen to Angiotensins"/>
</dbReference>
<dbReference type="Reactome" id="R-MMU-2132295">
    <property type="pathway name" value="MHC class II antigen presentation"/>
</dbReference>
<dbReference type="Reactome" id="R-MMU-6798695">
    <property type="pathway name" value="Neutrophil degranulation"/>
</dbReference>
<dbReference type="Reactome" id="R-MMU-77387">
    <property type="pathway name" value="Insulin receptor recycling"/>
</dbReference>
<dbReference type="BioGRID-ORCS" id="13033">
    <property type="hits" value="2 hits in 80 CRISPR screens"/>
</dbReference>
<dbReference type="CD-CODE" id="8F289D40">
    <property type="entry name" value="ELVA"/>
</dbReference>
<dbReference type="ChiTaRS" id="Ctsd">
    <property type="organism name" value="mouse"/>
</dbReference>
<dbReference type="PRO" id="PR:P18242"/>
<dbReference type="Proteomes" id="UP000000589">
    <property type="component" value="Chromosome 7"/>
</dbReference>
<dbReference type="RNAct" id="P18242">
    <property type="molecule type" value="protein"/>
</dbReference>
<dbReference type="Bgee" id="ENSMUSG00000007891">
    <property type="expression patterns" value="Expressed in choroid plexus of fourth ventricle and 279 other cell types or tissues"/>
</dbReference>
<dbReference type="ExpressionAtlas" id="P18242">
    <property type="expression patterns" value="baseline and differential"/>
</dbReference>
<dbReference type="GO" id="GO:0062023">
    <property type="term" value="C:collagen-containing extracellular matrix"/>
    <property type="evidence" value="ECO:0007005"/>
    <property type="project" value="BHF-UCL"/>
</dbReference>
<dbReference type="GO" id="GO:0005829">
    <property type="term" value="C:cytosol"/>
    <property type="evidence" value="ECO:0007669"/>
    <property type="project" value="Ensembl"/>
</dbReference>
<dbReference type="GO" id="GO:0031904">
    <property type="term" value="C:endosome lumen"/>
    <property type="evidence" value="ECO:0000314"/>
    <property type="project" value="MGI"/>
</dbReference>
<dbReference type="GO" id="GO:0010008">
    <property type="term" value="C:endosome membrane"/>
    <property type="evidence" value="ECO:0007669"/>
    <property type="project" value="Ensembl"/>
</dbReference>
<dbReference type="GO" id="GO:0005615">
    <property type="term" value="C:extracellular space"/>
    <property type="evidence" value="ECO:0000314"/>
    <property type="project" value="MGI"/>
</dbReference>
<dbReference type="GO" id="GO:0005765">
    <property type="term" value="C:lysosomal membrane"/>
    <property type="evidence" value="ECO:0007669"/>
    <property type="project" value="Ensembl"/>
</dbReference>
<dbReference type="GO" id="GO:0005764">
    <property type="term" value="C:lysosome"/>
    <property type="evidence" value="ECO:0000314"/>
    <property type="project" value="UniProtKB"/>
</dbReference>
<dbReference type="GO" id="GO:0042470">
    <property type="term" value="C:melanosome"/>
    <property type="evidence" value="ECO:0007669"/>
    <property type="project" value="UniProtKB-SubCell"/>
</dbReference>
<dbReference type="GO" id="GO:0045121">
    <property type="term" value="C:membrane raft"/>
    <property type="evidence" value="ECO:0007669"/>
    <property type="project" value="Ensembl"/>
</dbReference>
<dbReference type="GO" id="GO:0005739">
    <property type="term" value="C:mitochondrion"/>
    <property type="evidence" value="ECO:0007005"/>
    <property type="project" value="MGI"/>
</dbReference>
<dbReference type="GO" id="GO:0004190">
    <property type="term" value="F:aspartic-type endopeptidase activity"/>
    <property type="evidence" value="ECO:0000314"/>
    <property type="project" value="MGI"/>
</dbReference>
<dbReference type="GO" id="GO:0070001">
    <property type="term" value="F:aspartic-type peptidase activity"/>
    <property type="evidence" value="ECO:0000315"/>
    <property type="project" value="ARUK-UCL"/>
</dbReference>
<dbReference type="GO" id="GO:0004175">
    <property type="term" value="F:endopeptidase activity"/>
    <property type="evidence" value="ECO:0000314"/>
    <property type="project" value="MGI"/>
</dbReference>
<dbReference type="GO" id="GO:0016787">
    <property type="term" value="F:hydrolase activity"/>
    <property type="evidence" value="ECO:0000314"/>
    <property type="project" value="MGI"/>
</dbReference>
<dbReference type="GO" id="GO:0008233">
    <property type="term" value="F:peptidase activity"/>
    <property type="evidence" value="ECO:0000314"/>
    <property type="project" value="MGI"/>
</dbReference>
<dbReference type="GO" id="GO:0000045">
    <property type="term" value="P:autophagosome assembly"/>
    <property type="evidence" value="ECO:0000315"/>
    <property type="project" value="MGI"/>
</dbReference>
<dbReference type="GO" id="GO:0097194">
    <property type="term" value="P:execution phase of apoptosis"/>
    <property type="evidence" value="ECO:0007669"/>
    <property type="project" value="Ensembl"/>
</dbReference>
<dbReference type="GO" id="GO:1901143">
    <property type="term" value="P:insulin catabolic process"/>
    <property type="evidence" value="ECO:0000314"/>
    <property type="project" value="MGI"/>
</dbReference>
<dbReference type="GO" id="GO:0038020">
    <property type="term" value="P:insulin receptor recycling"/>
    <property type="evidence" value="ECO:0000314"/>
    <property type="project" value="MGI"/>
</dbReference>
<dbReference type="GO" id="GO:0042159">
    <property type="term" value="P:lipoprotein catabolic process"/>
    <property type="evidence" value="ECO:0007669"/>
    <property type="project" value="Ensembl"/>
</dbReference>
<dbReference type="GO" id="GO:0043065">
    <property type="term" value="P:positive regulation of apoptotic process"/>
    <property type="evidence" value="ECO:0007669"/>
    <property type="project" value="Ensembl"/>
</dbReference>
<dbReference type="GO" id="GO:0006508">
    <property type="term" value="P:proteolysis"/>
    <property type="evidence" value="ECO:0000305"/>
    <property type="project" value="MGI"/>
</dbReference>
<dbReference type="GO" id="GO:0070201">
    <property type="term" value="P:regulation of establishment of protein localization"/>
    <property type="evidence" value="ECO:0007669"/>
    <property type="project" value="Ensembl"/>
</dbReference>
<dbReference type="CDD" id="cd05490">
    <property type="entry name" value="Cathepsin_D2"/>
    <property type="match status" value="1"/>
</dbReference>
<dbReference type="FunFam" id="2.40.70.10:FF:000039">
    <property type="entry name" value="Cathepsin D preproprotein"/>
    <property type="match status" value="1"/>
</dbReference>
<dbReference type="FunFam" id="2.40.70.10:FF:000047">
    <property type="entry name" value="Cathepsin D preproprotein"/>
    <property type="match status" value="1"/>
</dbReference>
<dbReference type="Gene3D" id="2.40.70.10">
    <property type="entry name" value="Acid Proteases"/>
    <property type="match status" value="2"/>
</dbReference>
<dbReference type="InterPro" id="IPR001461">
    <property type="entry name" value="Aspartic_peptidase_A1"/>
</dbReference>
<dbReference type="InterPro" id="IPR001969">
    <property type="entry name" value="Aspartic_peptidase_AS"/>
</dbReference>
<dbReference type="InterPro" id="IPR012848">
    <property type="entry name" value="Aspartic_peptidase_N"/>
</dbReference>
<dbReference type="InterPro" id="IPR033144">
    <property type="entry name" value="Cathepsin_D"/>
</dbReference>
<dbReference type="InterPro" id="IPR033121">
    <property type="entry name" value="PEPTIDASE_A1"/>
</dbReference>
<dbReference type="InterPro" id="IPR021109">
    <property type="entry name" value="Peptidase_aspartic_dom_sf"/>
</dbReference>
<dbReference type="PANTHER" id="PTHR47966">
    <property type="entry name" value="BETA-SITE APP-CLEAVING ENZYME, ISOFORM A-RELATED"/>
    <property type="match status" value="1"/>
</dbReference>
<dbReference type="PANTHER" id="PTHR47966:SF42">
    <property type="entry name" value="CATHEPSIN D"/>
    <property type="match status" value="1"/>
</dbReference>
<dbReference type="Pfam" id="PF07966">
    <property type="entry name" value="A1_Propeptide"/>
    <property type="match status" value="1"/>
</dbReference>
<dbReference type="Pfam" id="PF00026">
    <property type="entry name" value="Asp"/>
    <property type="match status" value="1"/>
</dbReference>
<dbReference type="PRINTS" id="PR00792">
    <property type="entry name" value="PEPSIN"/>
</dbReference>
<dbReference type="SUPFAM" id="SSF50630">
    <property type="entry name" value="Acid proteases"/>
    <property type="match status" value="1"/>
</dbReference>
<dbReference type="PROSITE" id="PS00141">
    <property type="entry name" value="ASP_PROTEASE"/>
    <property type="match status" value="2"/>
</dbReference>
<dbReference type="PROSITE" id="PS51767">
    <property type="entry name" value="PEPTIDASE_A1"/>
    <property type="match status" value="1"/>
</dbReference>
<feature type="signal peptide" evidence="3">
    <location>
        <begin position="1"/>
        <end position="20"/>
    </location>
</feature>
<feature type="propeptide" id="PRO_0000025953" description="Activation peptide" evidence="3">
    <location>
        <begin position="21"/>
        <end position="64"/>
    </location>
</feature>
<feature type="chain" id="PRO_0000025954" description="Cathepsin D">
    <location>
        <begin position="65"/>
        <end position="410"/>
    </location>
</feature>
<feature type="domain" description="Peptidase A1" evidence="4">
    <location>
        <begin position="79"/>
        <end position="405"/>
    </location>
</feature>
<feature type="active site" evidence="5">
    <location>
        <position position="97"/>
    </location>
</feature>
<feature type="active site" evidence="5">
    <location>
        <position position="293"/>
    </location>
</feature>
<feature type="glycosylation site" description="N-linked (GlcNAc...) asparagine" evidence="1">
    <location>
        <position position="134"/>
    </location>
</feature>
<feature type="glycosylation site" description="N-linked (GlcNAc...) (high mannose) asparagine" evidence="6">
    <location>
        <position position="261"/>
    </location>
</feature>
<feature type="disulfide bond" evidence="1">
    <location>
        <begin position="91"/>
        <end position="160"/>
    </location>
</feature>
<feature type="disulfide bond" evidence="1">
    <location>
        <begin position="110"/>
        <end position="117"/>
    </location>
</feature>
<feature type="disulfide bond" evidence="1">
    <location>
        <begin position="284"/>
        <end position="288"/>
    </location>
</feature>
<feature type="disulfide bond" evidence="1">
    <location>
        <begin position="327"/>
        <end position="364"/>
    </location>
</feature>
<name>CATD_MOUSE</name>
<sequence>MKTPGVLLLILGLLASSSFAIIRIPLRKFTSIRRTMTEVGGSVEDLILKGPITKYSMQSSPKTTEPVSELLKNYLDAQYYGDIGIGTPPQCFTVVFDTGSSNLWVPSIHCKILDIACWVHHKYNSDKSSTYVKNGTSFDIHYGSGSLSGYLSQDTVSVPCKSDQSKARGIKVEKQIFGEATKQPGIVFVAAKFDGILGMGYPHISVNNVLPVFDNLMQQKLVDKNIFSFYLNRDPEGQPGGELMLGGTDSKYYHGELSYLNVTRKAYWQVHMDQLEVGNELTLCKGGCEAIVDTGTSLLVGPVEEVKELQKAIGAVPLIQGEYMIPCEKVSSLPTVYLKLGGKNYELHPDKYILKVSQGGKTICLSGFMGMDIPPPSGPLWILGDVFIGSYYTVFDRDNNRVGFANAVVL</sequence>
<comment type="function">
    <text evidence="2">Acid protease active in intracellular protein breakdown. Plays a role in APP processing following cleavage and activation by ADAM30 which leads to APP degradation.</text>
</comment>
<comment type="catalytic activity">
    <reaction>
        <text>Specificity similar to, but narrower than, that of pepsin A. Does not cleave the 4-Gln-|-His-5 bond in B chain of insulin.</text>
        <dbReference type="EC" id="3.4.23.5"/>
    </reaction>
</comment>
<comment type="subunit">
    <text evidence="2 7">Consists of a light chain and a heavy chain. Interacts with ADAM30; this leads to activation of CTSD. Interacts with GRN; stabilizes CTSD; increases its proteolytic activity (PubMed:28453791).</text>
</comment>
<comment type="subcellular location">
    <subcellularLocation>
        <location>Lysosome</location>
    </subcellularLocation>
    <subcellularLocation>
        <location evidence="1">Melanosome</location>
    </subcellularLocation>
    <subcellularLocation>
        <location evidence="1">Secreted</location>
        <location evidence="1">Extracellular space</location>
    </subcellularLocation>
</comment>
<comment type="PTM">
    <text evidence="2 6">N- and O-glycosylated.</text>
</comment>
<comment type="PTM">
    <text evidence="2">Undergoes proteolytic cleavage and activation by ADAM30.</text>
</comment>
<comment type="similarity">
    <text evidence="8">Belongs to the peptidase A1 family.</text>
</comment>
<gene>
    <name type="primary">Ctsd</name>
</gene>
<accession>P18242</accession>
<reference key="1">
    <citation type="journal article" date="1990" name="Nucleic Acids Res.">
        <title>Nucleotide sequence of a cDNA encoding mouse cathepsin D.</title>
        <authorList>
            <person name="Diedrich J.F."/>
            <person name="Staskus K.A."/>
            <person name="Retzel E.F."/>
            <person name="Haase A.T."/>
        </authorList>
    </citation>
    <scope>NUCLEOTIDE SEQUENCE [MRNA]</scope>
    <source>
        <strain>C57BL/6J</strain>
        <tissue>Brain</tissue>
    </source>
</reference>
<reference key="2">
    <citation type="journal article" date="1990" name="Nucleic Acids Res.">
        <title>Molecular cloning of mouse cathepsin D.</title>
        <authorList>
            <person name="Grusby M.J."/>
            <person name="Mitchell S.C."/>
            <person name="Glimcher L.H."/>
        </authorList>
    </citation>
    <scope>NUCLEOTIDE SEQUENCE [MRNA]</scope>
</reference>
<reference key="3">
    <citation type="journal article" date="1994" name="DNA Cell Biol.">
        <title>Mouse cathepsin D gene: molecular organization, characterization of the promoter, and chromosomal localization.</title>
        <authorList>
            <person name="Hetman M."/>
            <person name="Perschl A."/>
            <person name="Saftig P."/>
            <person name="von Figura K."/>
            <person name="Peters C."/>
        </authorList>
    </citation>
    <scope>NUCLEOTIDE SEQUENCE [GENOMIC DNA]</scope>
    <source>
        <strain>C57BL/6J</strain>
    </source>
</reference>
<reference key="4">
    <citation type="journal article" date="2004" name="Genome Res.">
        <title>The status, quality, and expansion of the NIH full-length cDNA project: the Mammalian Gene Collection (MGC).</title>
        <authorList>
            <consortium name="The MGC Project Team"/>
        </authorList>
    </citation>
    <scope>NUCLEOTIDE SEQUENCE [LARGE SCALE MRNA]</scope>
    <source>
        <strain>C57BL/6J</strain>
        <tissue>Brain</tissue>
        <tissue>Mammary gland</tissue>
    </source>
</reference>
<reference key="5">
    <citation type="journal article" date="2005" name="Mol. Cell. Proteomics">
        <title>High throughput quantitative glycomics and glycoform-focused proteomics of murine dermis and epidermis.</title>
        <authorList>
            <person name="Uematsu R."/>
            <person name="Furukawa J."/>
            <person name="Nakagawa H."/>
            <person name="Shinohara Y."/>
            <person name="Deguchi K."/>
            <person name="Monde K."/>
            <person name="Nishimura S."/>
        </authorList>
    </citation>
    <scope>GLYCOSYLATION [LARGE SCALE ANALYSIS] AT ASN-261</scope>
    <source>
        <tissue>Epidermis</tissue>
    </source>
</reference>
<reference key="6">
    <citation type="journal article" date="2010" name="Cell">
        <title>A tissue-specific atlas of mouse protein phosphorylation and expression.</title>
        <authorList>
            <person name="Huttlin E.L."/>
            <person name="Jedrychowski M.P."/>
            <person name="Elias J.E."/>
            <person name="Goswami T."/>
            <person name="Rad R."/>
            <person name="Beausoleil S.A."/>
            <person name="Villen J."/>
            <person name="Haas W."/>
            <person name="Sowa M.E."/>
            <person name="Gygi S.P."/>
        </authorList>
    </citation>
    <scope>IDENTIFICATION BY MASS SPECTROMETRY [LARGE SCALE ANALYSIS]</scope>
    <source>
        <tissue>Brown adipose tissue</tissue>
        <tissue>Kidney</tissue>
        <tissue>Spleen</tissue>
    </source>
</reference>
<reference key="7">
    <citation type="journal article" date="2017" name="Hum. Mol. Genet.">
        <title>Progranulin functions as a cathepsin D chaperone to stimulate axonal outgrowth in vivo.</title>
        <authorList>
            <person name="Beel S."/>
            <person name="Moisse M."/>
            <person name="Damme M."/>
            <person name="De Muynck L."/>
            <person name="Robberecht W."/>
            <person name="Van Den Bosch L."/>
            <person name="Saftig P."/>
            <person name="Van Damme P."/>
        </authorList>
    </citation>
    <scope>INTERACTION WITH GRN</scope>
</reference>
<organism>
    <name type="scientific">Mus musculus</name>
    <name type="common">Mouse</name>
    <dbReference type="NCBI Taxonomy" id="10090"/>
    <lineage>
        <taxon>Eukaryota</taxon>
        <taxon>Metazoa</taxon>
        <taxon>Chordata</taxon>
        <taxon>Craniata</taxon>
        <taxon>Vertebrata</taxon>
        <taxon>Euteleostomi</taxon>
        <taxon>Mammalia</taxon>
        <taxon>Eutheria</taxon>
        <taxon>Euarchontoglires</taxon>
        <taxon>Glires</taxon>
        <taxon>Rodentia</taxon>
        <taxon>Myomorpha</taxon>
        <taxon>Muroidea</taxon>
        <taxon>Muridae</taxon>
        <taxon>Murinae</taxon>
        <taxon>Mus</taxon>
        <taxon>Mus</taxon>
    </lineage>
</organism>